<gene>
    <name type="primary">SPG4</name>
    <name type="ordered locus">YMR107W</name>
    <name type="ORF">YM9718.06</name>
</gene>
<evidence type="ECO:0000256" key="1">
    <source>
        <dbReference type="SAM" id="MobiDB-lite"/>
    </source>
</evidence>
<evidence type="ECO:0000269" key="2">
    <source>
    </source>
</evidence>
<evidence type="ECO:0000269" key="3">
    <source>
    </source>
</evidence>
<evidence type="ECO:0000305" key="4"/>
<proteinExistence type="evidence at protein level"/>
<protein>
    <recommendedName>
        <fullName>Stationary phase protein 4</fullName>
    </recommendedName>
</protein>
<dbReference type="EMBL" id="Z49702">
    <property type="protein sequence ID" value="CAA89743.1"/>
    <property type="molecule type" value="Genomic_DNA"/>
</dbReference>
<dbReference type="EMBL" id="AY558405">
    <property type="protein sequence ID" value="AAS56731.1"/>
    <property type="molecule type" value="Genomic_DNA"/>
</dbReference>
<dbReference type="EMBL" id="BK006946">
    <property type="protein sequence ID" value="DAA10004.1"/>
    <property type="molecule type" value="Genomic_DNA"/>
</dbReference>
<dbReference type="PIR" id="S54568">
    <property type="entry name" value="S54568"/>
</dbReference>
<dbReference type="RefSeq" id="NP_013825.1">
    <property type="nucleotide sequence ID" value="NM_001182607.1"/>
</dbReference>
<dbReference type="SMR" id="Q04438"/>
<dbReference type="BioGRID" id="35283">
    <property type="interactions" value="38"/>
</dbReference>
<dbReference type="FunCoup" id="Q04438">
    <property type="interactions" value="63"/>
</dbReference>
<dbReference type="STRING" id="4932.YMR107W"/>
<dbReference type="iPTMnet" id="Q04438"/>
<dbReference type="PaxDb" id="4932-YMR107W"/>
<dbReference type="PeptideAtlas" id="Q04438"/>
<dbReference type="EnsemblFungi" id="YMR107W_mRNA">
    <property type="protein sequence ID" value="YMR107W"/>
    <property type="gene ID" value="YMR107W"/>
</dbReference>
<dbReference type="GeneID" id="855134"/>
<dbReference type="KEGG" id="sce:YMR107W"/>
<dbReference type="AGR" id="SGD:S000004713"/>
<dbReference type="SGD" id="S000004713">
    <property type="gene designation" value="SPG4"/>
</dbReference>
<dbReference type="VEuPathDB" id="FungiDB:YMR107W"/>
<dbReference type="eggNOG" id="ENOG502S7JY">
    <property type="taxonomic scope" value="Eukaryota"/>
</dbReference>
<dbReference type="HOGENOM" id="CLU_2158879_0_0_1"/>
<dbReference type="InParanoid" id="Q04438"/>
<dbReference type="OMA" id="AHEYREP"/>
<dbReference type="OrthoDB" id="4067991at2759"/>
<dbReference type="BioCyc" id="YEAST:G3O-32804-MONOMER"/>
<dbReference type="BioGRID-ORCS" id="855134">
    <property type="hits" value="1 hit in 10 CRISPR screens"/>
</dbReference>
<dbReference type="PRO" id="PR:Q04438"/>
<dbReference type="Proteomes" id="UP000002311">
    <property type="component" value="Chromosome XIII"/>
</dbReference>
<dbReference type="RNAct" id="Q04438">
    <property type="molecule type" value="protein"/>
</dbReference>
<dbReference type="InterPro" id="IPR020485">
    <property type="entry name" value="Spg4"/>
</dbReference>
<dbReference type="Pfam" id="PF17325">
    <property type="entry name" value="SPG4"/>
    <property type="match status" value="1"/>
</dbReference>
<name>SPG4_YEAST</name>
<reference key="1">
    <citation type="journal article" date="1997" name="Nature">
        <title>The nucleotide sequence of Saccharomyces cerevisiae chromosome XIII.</title>
        <authorList>
            <person name="Bowman S."/>
            <person name="Churcher C.M."/>
            <person name="Badcock K."/>
            <person name="Brown D."/>
            <person name="Chillingworth T."/>
            <person name="Connor R."/>
            <person name="Dedman K."/>
            <person name="Devlin K."/>
            <person name="Gentles S."/>
            <person name="Hamlin N."/>
            <person name="Hunt S."/>
            <person name="Jagels K."/>
            <person name="Lye G."/>
            <person name="Moule S."/>
            <person name="Odell C."/>
            <person name="Pearson D."/>
            <person name="Rajandream M.A."/>
            <person name="Rice P."/>
            <person name="Skelton J."/>
            <person name="Walsh S.V."/>
            <person name="Whitehead S."/>
            <person name="Barrell B.G."/>
        </authorList>
    </citation>
    <scope>NUCLEOTIDE SEQUENCE [LARGE SCALE GENOMIC DNA]</scope>
    <source>
        <strain>ATCC 204508 / S288c</strain>
    </source>
</reference>
<reference key="2">
    <citation type="journal article" date="2014" name="G3 (Bethesda)">
        <title>The reference genome sequence of Saccharomyces cerevisiae: Then and now.</title>
        <authorList>
            <person name="Engel S.R."/>
            <person name="Dietrich F.S."/>
            <person name="Fisk D.G."/>
            <person name="Binkley G."/>
            <person name="Balakrishnan R."/>
            <person name="Costanzo M.C."/>
            <person name="Dwight S.S."/>
            <person name="Hitz B.C."/>
            <person name="Karra K."/>
            <person name="Nash R.S."/>
            <person name="Weng S."/>
            <person name="Wong E.D."/>
            <person name="Lloyd P."/>
            <person name="Skrzypek M.S."/>
            <person name="Miyasato S.R."/>
            <person name="Simison M."/>
            <person name="Cherry J.M."/>
        </authorList>
    </citation>
    <scope>GENOME REANNOTATION</scope>
    <source>
        <strain>ATCC 204508 / S288c</strain>
    </source>
</reference>
<reference key="3">
    <citation type="journal article" date="2007" name="Genome Res.">
        <title>Approaching a complete repository of sequence-verified protein-encoding clones for Saccharomyces cerevisiae.</title>
        <authorList>
            <person name="Hu Y."/>
            <person name="Rolfs A."/>
            <person name="Bhullar B."/>
            <person name="Murthy T.V.S."/>
            <person name="Zhu C."/>
            <person name="Berger M.F."/>
            <person name="Camargo A.A."/>
            <person name="Kelley F."/>
            <person name="McCarron S."/>
            <person name="Jepson D."/>
            <person name="Richardson A."/>
            <person name="Raphael J."/>
            <person name="Moreira D."/>
            <person name="Taycher E."/>
            <person name="Zuo D."/>
            <person name="Mohr S."/>
            <person name="Kane M.F."/>
            <person name="Williamson J."/>
            <person name="Simpson A.J.G."/>
            <person name="Bulyk M.L."/>
            <person name="Harlow E."/>
            <person name="Marsischky G."/>
            <person name="Kolodner R.D."/>
            <person name="LaBaer J."/>
        </authorList>
    </citation>
    <scope>NUCLEOTIDE SEQUENCE [GENOMIC DNA]</scope>
    <source>
        <strain>ATCC 204508 / S288c</strain>
    </source>
</reference>
<reference key="4">
    <citation type="journal article" date="2003" name="Nature">
        <title>Global analysis of protein expression in yeast.</title>
        <authorList>
            <person name="Ghaemmaghami S."/>
            <person name="Huh W.-K."/>
            <person name="Bower K."/>
            <person name="Howson R.W."/>
            <person name="Belle A."/>
            <person name="Dephoure N."/>
            <person name="O'Shea E.K."/>
            <person name="Weissman J.S."/>
        </authorList>
    </citation>
    <scope>LEVEL OF PROTEIN EXPRESSION [LARGE SCALE ANALYSIS]</scope>
</reference>
<reference key="5">
    <citation type="journal article" date="2004" name="Mol. Biol. Cell">
        <title>Genomic analysis of stationary-phase and exit in Saccharomyces cerevisiae: gene expression and identification of novel essential genes.</title>
        <authorList>
            <person name="Martinez M.J."/>
            <person name="Roy S."/>
            <person name="Archuletta A.B."/>
            <person name="Wentzell P.D."/>
            <person name="Anna-Arriola S.S."/>
            <person name="Rodriguez A.L."/>
            <person name="Aragon A.D."/>
            <person name="Quinones G.A."/>
            <person name="Allen C."/>
            <person name="Werner-Washburne M."/>
        </authorList>
    </citation>
    <scope>FUNCTION</scope>
</reference>
<reference key="6">
    <citation type="journal article" date="2009" name="Science">
        <title>Global analysis of Cdk1 substrate phosphorylation sites provides insights into evolution.</title>
        <authorList>
            <person name="Holt L.J."/>
            <person name="Tuch B.B."/>
            <person name="Villen J."/>
            <person name="Johnson A.D."/>
            <person name="Gygi S.P."/>
            <person name="Morgan D.O."/>
        </authorList>
    </citation>
    <scope>IDENTIFICATION BY MASS SPECTROMETRY [LARGE SCALE ANALYSIS]</scope>
</reference>
<keyword id="KW-1185">Reference proteome</keyword>
<sequence>MGSFWDAFAVYDKKKHADPSVYGGNHNNTGDSKTQVMFSKEYRQPRTHQQENLQSMRRSSIGSQDSSDVEDVKEGRLPAEVEIPKNVDISNMSQGEFLRLYESLRRGEPDNKVNR</sequence>
<feature type="chain" id="PRO_0000203290" description="Stationary phase protein 4">
    <location>
        <begin position="1"/>
        <end position="115"/>
    </location>
</feature>
<feature type="region of interest" description="Disordered" evidence="1">
    <location>
        <begin position="16"/>
        <end position="77"/>
    </location>
</feature>
<feature type="compositionally biased region" description="Polar residues" evidence="1">
    <location>
        <begin position="25"/>
        <end position="37"/>
    </location>
</feature>
<feature type="compositionally biased region" description="Polar residues" evidence="1">
    <location>
        <begin position="50"/>
        <end position="66"/>
    </location>
</feature>
<accession>Q04438</accession>
<accession>D6VZT0</accession>
<organism>
    <name type="scientific">Saccharomyces cerevisiae (strain ATCC 204508 / S288c)</name>
    <name type="common">Baker's yeast</name>
    <dbReference type="NCBI Taxonomy" id="559292"/>
    <lineage>
        <taxon>Eukaryota</taxon>
        <taxon>Fungi</taxon>
        <taxon>Dikarya</taxon>
        <taxon>Ascomycota</taxon>
        <taxon>Saccharomycotina</taxon>
        <taxon>Saccharomycetes</taxon>
        <taxon>Saccharomycetales</taxon>
        <taxon>Saccharomycetaceae</taxon>
        <taxon>Saccharomyces</taxon>
    </lineage>
</organism>
<comment type="function">
    <text evidence="3">Stationary phase-essential protein not required for growth on nonfermentable carbon sources.</text>
</comment>
<comment type="miscellaneous">
    <text evidence="2">Present with 259 molecules/cell in log phase SD medium.</text>
</comment>
<comment type="similarity">
    <text evidence="4">Belongs to the SPG4 family.</text>
</comment>